<keyword id="KW-0997">Cell inner membrane</keyword>
<keyword id="KW-1003">Cell membrane</keyword>
<keyword id="KW-0408">Iron</keyword>
<keyword id="KW-0472">Membrane</keyword>
<keyword id="KW-0479">Metal-binding</keyword>
<keyword id="KW-1185">Reference proteome</keyword>
<keyword id="KW-0677">Repeat</keyword>
<keyword id="KW-0802">TPR repeat</keyword>
<keyword id="KW-0812">Transmembrane</keyword>
<keyword id="KW-1133">Transmembrane helix</keyword>
<sequence length="396" mass="45627">MIELLFLLLPIAAAYGWYMGRRSAKKDQDDISNKLSRDYVTGVNFLLSNQTDKAVDLFLDMLQKQEIENEIESHSQFEAELTLGNLFRSRGEVDRALRIHQALDLSPNYTFEQKLLAKQQLARDFMVVGFFDRAENLYILLVDEPEFAENALQQLLVIYQKTKEWKKAVNIAEKLAKIKPQENNIELAQCYCEYSQSLEPESAVEKRSVLQKALSVSPTCVRASLLLANLAMLDGQYQQAVKILENVLEQNPDYTGEILLPLKHCYEELNQLDNFELFLIRAGQIINNDEVELALAKLIEEKDGKSAAQAKLYQQLTKKPSTLIFHRFMQYQIDDAEDGRGKESLILLHKMVGERIKQTSPYRCTNCGYQIHKLLWNCPSCRQWESIKPVSNQEHN</sequence>
<proteinExistence type="inferred from homology"/>
<accession>P44130</accession>
<evidence type="ECO:0000255" key="1">
    <source>
        <dbReference type="HAMAP-Rule" id="MF_00994"/>
    </source>
</evidence>
<organism>
    <name type="scientific">Haemophilus influenzae (strain ATCC 51907 / DSM 11121 / KW20 / Rd)</name>
    <dbReference type="NCBI Taxonomy" id="71421"/>
    <lineage>
        <taxon>Bacteria</taxon>
        <taxon>Pseudomonadati</taxon>
        <taxon>Pseudomonadota</taxon>
        <taxon>Gammaproteobacteria</taxon>
        <taxon>Pasteurellales</taxon>
        <taxon>Pasteurellaceae</taxon>
        <taxon>Haemophilus</taxon>
    </lineage>
</organism>
<dbReference type="EMBL" id="L42023">
    <property type="protein sequence ID" value="AAC22876.1"/>
    <property type="molecule type" value="Genomic_DNA"/>
</dbReference>
<dbReference type="PIR" id="D64022">
    <property type="entry name" value="D64022"/>
</dbReference>
<dbReference type="RefSeq" id="NP_439379.1">
    <property type="nucleotide sequence ID" value="NC_000907.1"/>
</dbReference>
<dbReference type="SMR" id="P44130"/>
<dbReference type="STRING" id="71421.HI_1223"/>
<dbReference type="EnsemblBacteria" id="AAC22876">
    <property type="protein sequence ID" value="AAC22876"/>
    <property type="gene ID" value="HI_1223"/>
</dbReference>
<dbReference type="KEGG" id="hin:HI_1223"/>
<dbReference type="PATRIC" id="fig|71421.8.peg.1275"/>
<dbReference type="eggNOG" id="COG2956">
    <property type="taxonomic scope" value="Bacteria"/>
</dbReference>
<dbReference type="HOGENOM" id="CLU_059365_1_0_6"/>
<dbReference type="OrthoDB" id="507476at2"/>
<dbReference type="PhylomeDB" id="P44130"/>
<dbReference type="BioCyc" id="HINF71421:G1GJ1-1254-MONOMER"/>
<dbReference type="Proteomes" id="UP000000579">
    <property type="component" value="Chromosome"/>
</dbReference>
<dbReference type="GO" id="GO:0009898">
    <property type="term" value="C:cytoplasmic side of plasma membrane"/>
    <property type="evidence" value="ECO:0007669"/>
    <property type="project" value="UniProtKB-UniRule"/>
</dbReference>
<dbReference type="GO" id="GO:0005506">
    <property type="term" value="F:iron ion binding"/>
    <property type="evidence" value="ECO:0007669"/>
    <property type="project" value="UniProtKB-UniRule"/>
</dbReference>
<dbReference type="GO" id="GO:0008653">
    <property type="term" value="P:lipopolysaccharide metabolic process"/>
    <property type="evidence" value="ECO:0007669"/>
    <property type="project" value="InterPro"/>
</dbReference>
<dbReference type="GO" id="GO:0046890">
    <property type="term" value="P:regulation of lipid biosynthetic process"/>
    <property type="evidence" value="ECO:0007669"/>
    <property type="project" value="UniProtKB-UniRule"/>
</dbReference>
<dbReference type="Gene3D" id="1.25.40.10">
    <property type="entry name" value="Tetratricopeptide repeat domain"/>
    <property type="match status" value="2"/>
</dbReference>
<dbReference type="HAMAP" id="MF_00994">
    <property type="entry name" value="LPS_assembly_LapB"/>
    <property type="match status" value="1"/>
</dbReference>
<dbReference type="InterPro" id="IPR051012">
    <property type="entry name" value="CellSynth/LPSAsmb/PSIAsmb"/>
</dbReference>
<dbReference type="InterPro" id="IPR030865">
    <property type="entry name" value="LapB"/>
</dbReference>
<dbReference type="InterPro" id="IPR041166">
    <property type="entry name" value="Rubredoxin_2"/>
</dbReference>
<dbReference type="InterPro" id="IPR011990">
    <property type="entry name" value="TPR-like_helical_dom_sf"/>
</dbReference>
<dbReference type="InterPro" id="IPR019734">
    <property type="entry name" value="TPR_rpt"/>
</dbReference>
<dbReference type="NCBIfam" id="NF008753">
    <property type="entry name" value="PRK11788.1-1"/>
    <property type="match status" value="1"/>
</dbReference>
<dbReference type="NCBIfam" id="NF008756">
    <property type="entry name" value="PRK11788.1-4"/>
    <property type="match status" value="1"/>
</dbReference>
<dbReference type="NCBIfam" id="NF008757">
    <property type="entry name" value="PRK11788.1-5"/>
    <property type="match status" value="1"/>
</dbReference>
<dbReference type="PANTHER" id="PTHR45586:SF1">
    <property type="entry name" value="LIPOPOLYSACCHARIDE ASSEMBLY PROTEIN B"/>
    <property type="match status" value="1"/>
</dbReference>
<dbReference type="PANTHER" id="PTHR45586">
    <property type="entry name" value="TPR REPEAT-CONTAINING PROTEIN PA4667"/>
    <property type="match status" value="1"/>
</dbReference>
<dbReference type="Pfam" id="PF14559">
    <property type="entry name" value="TPR_19"/>
    <property type="match status" value="1"/>
</dbReference>
<dbReference type="Pfam" id="PF13176">
    <property type="entry name" value="TPR_7"/>
    <property type="match status" value="1"/>
</dbReference>
<dbReference type="Pfam" id="PF18073">
    <property type="entry name" value="Zn_ribbon_LapB"/>
    <property type="match status" value="1"/>
</dbReference>
<dbReference type="SMART" id="SM00028">
    <property type="entry name" value="TPR"/>
    <property type="match status" value="3"/>
</dbReference>
<dbReference type="SUPFAM" id="SSF48452">
    <property type="entry name" value="TPR-like"/>
    <property type="match status" value="1"/>
</dbReference>
<dbReference type="PROSITE" id="PS50005">
    <property type="entry name" value="TPR"/>
    <property type="match status" value="3"/>
</dbReference>
<dbReference type="PROSITE" id="PS50293">
    <property type="entry name" value="TPR_REGION"/>
    <property type="match status" value="1"/>
</dbReference>
<name>LAPB_HAEIN</name>
<protein>
    <recommendedName>
        <fullName evidence="1">Lipopolysaccharide assembly protein B</fullName>
    </recommendedName>
</protein>
<gene>
    <name evidence="1" type="primary">lapB</name>
    <name type="ordered locus">HI_1223</name>
</gene>
<comment type="function">
    <text evidence="1">Modulates cellular lipopolysaccharide (LPS) levels by regulating LpxC, which is involved in lipid A biosynthesis. May act by modulating the proteolytic activity of FtsH towards LpxC. May also coordinate assembly of proteins involved in LPS synthesis at the plasma membrane.</text>
</comment>
<comment type="subcellular location">
    <subcellularLocation>
        <location evidence="1">Cell inner membrane</location>
        <topology evidence="1">Single-pass membrane protein</topology>
        <orientation evidence="1">Cytoplasmic side</orientation>
    </subcellularLocation>
</comment>
<comment type="similarity">
    <text evidence="1">Belongs to the LapB family.</text>
</comment>
<reference key="1">
    <citation type="journal article" date="1995" name="Science">
        <title>Whole-genome random sequencing and assembly of Haemophilus influenzae Rd.</title>
        <authorList>
            <person name="Fleischmann R.D."/>
            <person name="Adams M.D."/>
            <person name="White O."/>
            <person name="Clayton R.A."/>
            <person name="Kirkness E.F."/>
            <person name="Kerlavage A.R."/>
            <person name="Bult C.J."/>
            <person name="Tomb J.-F."/>
            <person name="Dougherty B.A."/>
            <person name="Merrick J.M."/>
            <person name="McKenney K."/>
            <person name="Sutton G.G."/>
            <person name="FitzHugh W."/>
            <person name="Fields C.A."/>
            <person name="Gocayne J.D."/>
            <person name="Scott J.D."/>
            <person name="Shirley R."/>
            <person name="Liu L.-I."/>
            <person name="Glodek A."/>
            <person name="Kelley J.M."/>
            <person name="Weidman J.F."/>
            <person name="Phillips C.A."/>
            <person name="Spriggs T."/>
            <person name="Hedblom E."/>
            <person name="Cotton M.D."/>
            <person name="Utterback T.R."/>
            <person name="Hanna M.C."/>
            <person name="Nguyen D.T."/>
            <person name="Saudek D.M."/>
            <person name="Brandon R.C."/>
            <person name="Fine L.D."/>
            <person name="Fritchman J.L."/>
            <person name="Fuhrmann J.L."/>
            <person name="Geoghagen N.S.M."/>
            <person name="Gnehm C.L."/>
            <person name="McDonald L.A."/>
            <person name="Small K.V."/>
            <person name="Fraser C.M."/>
            <person name="Smith H.O."/>
            <person name="Venter J.C."/>
        </authorList>
    </citation>
    <scope>NUCLEOTIDE SEQUENCE [LARGE SCALE GENOMIC DNA]</scope>
    <source>
        <strain>ATCC 51907 / DSM 11121 / KW20 / Rd</strain>
    </source>
</reference>
<feature type="chain" id="PRO_0000013831" description="Lipopolysaccharide assembly protein B">
    <location>
        <begin position="1"/>
        <end position="396"/>
    </location>
</feature>
<feature type="transmembrane region" description="Helical" evidence="1">
    <location>
        <begin position="1"/>
        <end position="20"/>
    </location>
</feature>
<feature type="topological domain" description="Cytoplasmic" evidence="1">
    <location>
        <begin position="21"/>
        <end position="396"/>
    </location>
</feature>
<feature type="repeat" description="TPR 1" evidence="1">
    <location>
        <begin position="35"/>
        <end position="68"/>
    </location>
</feature>
<feature type="repeat" description="TPR 2" evidence="1">
    <location>
        <begin position="77"/>
        <end position="109"/>
    </location>
</feature>
<feature type="repeat" description="TPR 3" evidence="1">
    <location>
        <begin position="149"/>
        <end position="182"/>
    </location>
</feature>
<feature type="repeat" description="TPR 4" evidence="1">
    <location>
        <begin position="221"/>
        <end position="254"/>
    </location>
</feature>
<feature type="binding site" evidence="1">
    <location>
        <position position="364"/>
    </location>
    <ligand>
        <name>Fe cation</name>
        <dbReference type="ChEBI" id="CHEBI:24875"/>
    </ligand>
</feature>
<feature type="binding site" evidence="1">
    <location>
        <position position="367"/>
    </location>
    <ligand>
        <name>Fe cation</name>
        <dbReference type="ChEBI" id="CHEBI:24875"/>
    </ligand>
</feature>
<feature type="binding site" evidence="1">
    <location>
        <position position="378"/>
    </location>
    <ligand>
        <name>Fe cation</name>
        <dbReference type="ChEBI" id="CHEBI:24875"/>
    </ligand>
</feature>
<feature type="binding site" evidence="1">
    <location>
        <position position="381"/>
    </location>
    <ligand>
        <name>Fe cation</name>
        <dbReference type="ChEBI" id="CHEBI:24875"/>
    </ligand>
</feature>